<proteinExistence type="inferred from homology"/>
<keyword id="KW-0175">Coiled coil</keyword>
<keyword id="KW-0963">Cytoplasm</keyword>
<keyword id="KW-1185">Reference proteome</keyword>
<keyword id="KW-0346">Stress response</keyword>
<accession>B7L534</accession>
<feature type="chain" id="PRO_1000164550" description="Anti-adapter protein IraP">
    <location>
        <begin position="1"/>
        <end position="86"/>
    </location>
</feature>
<feature type="coiled-coil region" evidence="1">
    <location>
        <begin position="1"/>
        <end position="36"/>
    </location>
</feature>
<dbReference type="EMBL" id="CU928145">
    <property type="protein sequence ID" value="CAU96262.1"/>
    <property type="molecule type" value="Genomic_DNA"/>
</dbReference>
<dbReference type="RefSeq" id="WP_000792970.1">
    <property type="nucleotide sequence ID" value="NC_011748.1"/>
</dbReference>
<dbReference type="SMR" id="B7L534"/>
<dbReference type="GeneID" id="93777080"/>
<dbReference type="KEGG" id="eck:EC55989_0388"/>
<dbReference type="HOGENOM" id="CLU_169517_0_0_6"/>
<dbReference type="Proteomes" id="UP000000746">
    <property type="component" value="Chromosome"/>
</dbReference>
<dbReference type="GO" id="GO:0005737">
    <property type="term" value="C:cytoplasm"/>
    <property type="evidence" value="ECO:0007669"/>
    <property type="project" value="UniProtKB-SubCell"/>
</dbReference>
<dbReference type="GO" id="GO:0009267">
    <property type="term" value="P:cellular response to starvation"/>
    <property type="evidence" value="ECO:0007669"/>
    <property type="project" value="UniProtKB-UniRule"/>
</dbReference>
<dbReference type="HAMAP" id="MF_01198">
    <property type="entry name" value="Anti_adapt_IraP"/>
    <property type="match status" value="1"/>
</dbReference>
<dbReference type="InterPro" id="IPR019732">
    <property type="entry name" value="SigmaS_Anti-adapt_IraP"/>
</dbReference>
<dbReference type="NCBIfam" id="NF007598">
    <property type="entry name" value="PRK10244.1"/>
    <property type="match status" value="1"/>
</dbReference>
<dbReference type="Pfam" id="PF10796">
    <property type="entry name" value="Anti-adapt_IraP"/>
    <property type="match status" value="1"/>
</dbReference>
<sequence>MKNLIAELLFKLAQKEEESKELCAQVEALEIIVTAMLRNMAQNDQQRLIDQVEGALYEVKPDASIPDDDTELLRDYVKKLLKHPRQ</sequence>
<gene>
    <name evidence="1" type="primary">iraP</name>
    <name type="ordered locus">EC55989_0388</name>
</gene>
<protein>
    <recommendedName>
        <fullName evidence="1">Anti-adapter protein IraP</fullName>
    </recommendedName>
</protein>
<comment type="function">
    <text evidence="1">Inhibits RpoS proteolysis by regulating RssB activity, thereby increasing the stability of the sigma stress factor RpoS especially during phosphate starvation, but also in stationary phase and during nitrogen starvation. Its effect on RpoS stability is due to its interaction with RssB, which probably blocks the interaction of RssB with RpoS, and the consequent delivery of the RssB-RpoS complex to the ClpXP protein degradation pathway.</text>
</comment>
<comment type="subunit">
    <text evidence="1">Interacts with RssB.</text>
</comment>
<comment type="subcellular location">
    <subcellularLocation>
        <location evidence="1">Cytoplasm</location>
    </subcellularLocation>
</comment>
<comment type="similarity">
    <text evidence="1">Belongs to the IraP family.</text>
</comment>
<reference key="1">
    <citation type="journal article" date="2009" name="PLoS Genet.">
        <title>Organised genome dynamics in the Escherichia coli species results in highly diverse adaptive paths.</title>
        <authorList>
            <person name="Touchon M."/>
            <person name="Hoede C."/>
            <person name="Tenaillon O."/>
            <person name="Barbe V."/>
            <person name="Baeriswyl S."/>
            <person name="Bidet P."/>
            <person name="Bingen E."/>
            <person name="Bonacorsi S."/>
            <person name="Bouchier C."/>
            <person name="Bouvet O."/>
            <person name="Calteau A."/>
            <person name="Chiapello H."/>
            <person name="Clermont O."/>
            <person name="Cruveiller S."/>
            <person name="Danchin A."/>
            <person name="Diard M."/>
            <person name="Dossat C."/>
            <person name="Karoui M.E."/>
            <person name="Frapy E."/>
            <person name="Garry L."/>
            <person name="Ghigo J.M."/>
            <person name="Gilles A.M."/>
            <person name="Johnson J."/>
            <person name="Le Bouguenec C."/>
            <person name="Lescat M."/>
            <person name="Mangenot S."/>
            <person name="Martinez-Jehanne V."/>
            <person name="Matic I."/>
            <person name="Nassif X."/>
            <person name="Oztas S."/>
            <person name="Petit M.A."/>
            <person name="Pichon C."/>
            <person name="Rouy Z."/>
            <person name="Ruf C.S."/>
            <person name="Schneider D."/>
            <person name="Tourret J."/>
            <person name="Vacherie B."/>
            <person name="Vallenet D."/>
            <person name="Medigue C."/>
            <person name="Rocha E.P.C."/>
            <person name="Denamur E."/>
        </authorList>
    </citation>
    <scope>NUCLEOTIDE SEQUENCE [LARGE SCALE GENOMIC DNA]</scope>
    <source>
        <strain>55989 / EAEC</strain>
    </source>
</reference>
<evidence type="ECO:0000255" key="1">
    <source>
        <dbReference type="HAMAP-Rule" id="MF_01198"/>
    </source>
</evidence>
<name>IRAP_ECO55</name>
<organism>
    <name type="scientific">Escherichia coli (strain 55989 / EAEC)</name>
    <dbReference type="NCBI Taxonomy" id="585055"/>
    <lineage>
        <taxon>Bacteria</taxon>
        <taxon>Pseudomonadati</taxon>
        <taxon>Pseudomonadota</taxon>
        <taxon>Gammaproteobacteria</taxon>
        <taxon>Enterobacterales</taxon>
        <taxon>Enterobacteriaceae</taxon>
        <taxon>Escherichia</taxon>
    </lineage>
</organism>